<accession>H1ZZI1</accession>
<evidence type="ECO:0000250" key="1"/>
<evidence type="ECO:0000255" key="2"/>
<evidence type="ECO:0000255" key="3">
    <source>
        <dbReference type="PROSITE-ProRule" id="PRU01210"/>
    </source>
</evidence>
<evidence type="ECO:0000305" key="4"/>
<reference key="1">
    <citation type="journal article" date="2012" name="PLoS ONE">
        <title>Identification and phylogenetic analysis of Tityus pachyurus and Tityus obscurus novel putative Na+-channel scorpion toxins.</title>
        <authorList>
            <person name="Guerrero-Vargas J.A."/>
            <person name="Mourao C.B."/>
            <person name="Quintero-Hernandez V."/>
            <person name="Possani L.D."/>
            <person name="Schwartz E.F."/>
        </authorList>
    </citation>
    <scope>NUCLEOTIDE SEQUENCE [MRNA]</scope>
    <scope>NOMENCLATURE</scope>
    <source>
        <tissue>Venom gland</tissue>
    </source>
</reference>
<feature type="signal peptide" evidence="2">
    <location>
        <begin position="1"/>
        <end position="19"/>
    </location>
</feature>
<feature type="chain" id="PRO_5000851436" description="Toxin To12">
    <location>
        <begin position="20"/>
        <end position="81"/>
    </location>
</feature>
<feature type="domain" description="LCN-type CS-alpha/beta" evidence="3">
    <location>
        <begin position="20"/>
        <end position="82"/>
    </location>
</feature>
<feature type="modified residue" description="Cysteine amide" evidence="1">
    <location>
        <position position="81"/>
    </location>
</feature>
<feature type="disulfide bond" evidence="3">
    <location>
        <begin position="30"/>
        <end position="81"/>
    </location>
</feature>
<feature type="disulfide bond" evidence="3">
    <location>
        <begin position="34"/>
        <end position="57"/>
    </location>
</feature>
<feature type="disulfide bond" evidence="3">
    <location>
        <begin position="42"/>
        <end position="62"/>
    </location>
</feature>
<feature type="disulfide bond" evidence="3">
    <location>
        <begin position="46"/>
        <end position="64"/>
    </location>
</feature>
<sequence length="83" mass="9417">MKGLILFICGFMMIGVILAKEGYPMDHEGCKFSCFIRPSGFCERYCKTHLSASTGYCAWPACYCYGVPANQKVWDYYNNKCGK</sequence>
<dbReference type="EMBL" id="HE585235">
    <property type="protein sequence ID" value="CCD31429.1"/>
    <property type="molecule type" value="mRNA"/>
</dbReference>
<dbReference type="SMR" id="H1ZZI1"/>
<dbReference type="GO" id="GO:0005576">
    <property type="term" value="C:extracellular region"/>
    <property type="evidence" value="ECO:0007669"/>
    <property type="project" value="UniProtKB-SubCell"/>
</dbReference>
<dbReference type="GO" id="GO:0019871">
    <property type="term" value="F:sodium channel inhibitor activity"/>
    <property type="evidence" value="ECO:0007669"/>
    <property type="project" value="InterPro"/>
</dbReference>
<dbReference type="GO" id="GO:0090729">
    <property type="term" value="F:toxin activity"/>
    <property type="evidence" value="ECO:0007669"/>
    <property type="project" value="UniProtKB-KW"/>
</dbReference>
<dbReference type="GO" id="GO:0006952">
    <property type="term" value="P:defense response"/>
    <property type="evidence" value="ECO:0007669"/>
    <property type="project" value="InterPro"/>
</dbReference>
<dbReference type="CDD" id="cd23106">
    <property type="entry name" value="neurotoxins_LC_scorpion"/>
    <property type="match status" value="1"/>
</dbReference>
<dbReference type="FunFam" id="3.30.30.10:FF:000002">
    <property type="entry name" value="Alpha-like toxin BmK-M1"/>
    <property type="match status" value="1"/>
</dbReference>
<dbReference type="Gene3D" id="3.30.30.10">
    <property type="entry name" value="Knottin, scorpion toxin-like"/>
    <property type="match status" value="1"/>
</dbReference>
<dbReference type="InterPro" id="IPR044062">
    <property type="entry name" value="LCN-type_CS_alpha_beta_dom"/>
</dbReference>
<dbReference type="InterPro" id="IPR003614">
    <property type="entry name" value="Scorpion_toxin-like"/>
</dbReference>
<dbReference type="InterPro" id="IPR036574">
    <property type="entry name" value="Scorpion_toxin-like_sf"/>
</dbReference>
<dbReference type="InterPro" id="IPR018218">
    <property type="entry name" value="Scorpion_toxinL"/>
</dbReference>
<dbReference type="InterPro" id="IPR002061">
    <property type="entry name" value="Scorpion_toxinL/defensin"/>
</dbReference>
<dbReference type="Pfam" id="PF00537">
    <property type="entry name" value="Toxin_3"/>
    <property type="match status" value="1"/>
</dbReference>
<dbReference type="PRINTS" id="PR00285">
    <property type="entry name" value="SCORPNTOXIN"/>
</dbReference>
<dbReference type="SMART" id="SM00505">
    <property type="entry name" value="Knot1"/>
    <property type="match status" value="1"/>
</dbReference>
<dbReference type="SUPFAM" id="SSF57095">
    <property type="entry name" value="Scorpion toxin-like"/>
    <property type="match status" value="1"/>
</dbReference>
<dbReference type="PROSITE" id="PS51863">
    <property type="entry name" value="LCN_CSAB"/>
    <property type="match status" value="1"/>
</dbReference>
<proteinExistence type="evidence at transcript level"/>
<protein>
    <recommendedName>
        <fullName>Toxin To12</fullName>
    </recommendedName>
    <alternativeName>
        <fullName>T-beta* NaTx5.5</fullName>
    </alternativeName>
</protein>
<name>SCX12_TITOB</name>
<organism>
    <name type="scientific">Tityus obscurus</name>
    <name type="common">Amazonian scorpion</name>
    <name type="synonym">Tityus cambridgei</name>
    <dbReference type="NCBI Taxonomy" id="1221240"/>
    <lineage>
        <taxon>Eukaryota</taxon>
        <taxon>Metazoa</taxon>
        <taxon>Ecdysozoa</taxon>
        <taxon>Arthropoda</taxon>
        <taxon>Chelicerata</taxon>
        <taxon>Arachnida</taxon>
        <taxon>Scorpiones</taxon>
        <taxon>Buthida</taxon>
        <taxon>Buthoidea</taxon>
        <taxon>Buthidae</taxon>
        <taxon>Tityus</taxon>
    </lineage>
</organism>
<keyword id="KW-0027">Amidation</keyword>
<keyword id="KW-1015">Disulfide bond</keyword>
<keyword id="KW-0872">Ion channel impairing toxin</keyword>
<keyword id="KW-0528">Neurotoxin</keyword>
<keyword id="KW-0964">Secreted</keyword>
<keyword id="KW-0732">Signal</keyword>
<keyword id="KW-0800">Toxin</keyword>
<keyword id="KW-0738">Voltage-gated sodium channel impairing toxin</keyword>
<comment type="function">
    <text evidence="1">Beta toxins bind voltage-independently at site-4 of sodium channels (Nav) and shift the voltage of activation toward more negative potentials thereby affecting sodium channel activation and promoting spontaneous and repetitive firing.</text>
</comment>
<comment type="subcellular location">
    <subcellularLocation>
        <location evidence="1">Secreted</location>
    </subcellularLocation>
</comment>
<comment type="tissue specificity">
    <text>Expressed by the venom gland.</text>
</comment>
<comment type="domain">
    <text evidence="4">Has the structural arrangement of an alpha-helix connected to antiparallel beta-sheets by disulfide bonds (CS-alpha/beta).</text>
</comment>
<comment type="similarity">
    <text evidence="4">Belongs to the long (4 C-C) scorpion toxin superfamily. Sodium channel inhibitor family. Beta subfamily.</text>
</comment>